<feature type="signal peptide" evidence="1">
    <location>
        <begin position="1"/>
        <end position="22"/>
    </location>
</feature>
<feature type="propeptide" id="PRO_0000450010" evidence="5">
    <location>
        <begin position="23"/>
        <end position="46"/>
    </location>
</feature>
<feature type="peptide" id="PRO_5002952322" description="Temporin-ALj">
    <location>
        <begin position="47"/>
        <end position="59"/>
    </location>
</feature>
<feature type="modified residue" description="Leucine amide" evidence="5">
    <location>
        <position position="59"/>
    </location>
</feature>
<organism>
    <name type="scientific">Amolops loloensis</name>
    <name type="common">Lolokou Sucker Frog</name>
    <name type="synonym">Staurois loloensis</name>
    <dbReference type="NCBI Taxonomy" id="318551"/>
    <lineage>
        <taxon>Eukaryota</taxon>
        <taxon>Metazoa</taxon>
        <taxon>Chordata</taxon>
        <taxon>Craniata</taxon>
        <taxon>Vertebrata</taxon>
        <taxon>Euteleostomi</taxon>
        <taxon>Amphibia</taxon>
        <taxon>Batrachia</taxon>
        <taxon>Anura</taxon>
        <taxon>Neobatrachia</taxon>
        <taxon>Ranoidea</taxon>
        <taxon>Ranidae</taxon>
        <taxon>Amolops</taxon>
    </lineage>
</organism>
<protein>
    <recommendedName>
        <fullName evidence="3">Temporin-ALj</fullName>
    </recommendedName>
    <alternativeName>
        <fullName evidence="6">Amolopin-2k</fullName>
    </alternativeName>
</protein>
<reference key="1">
    <citation type="journal article" date="2010" name="Comp. Biochem. Physiol.">
        <title>Five novel antimicrobial peptides from skin secretions of the frog, Amolops loloensis.</title>
        <authorList>
            <person name="Wang M."/>
            <person name="Wang Y."/>
            <person name="Wang A."/>
            <person name="Song Y."/>
            <person name="Ma D."/>
            <person name="Yang H."/>
            <person name="Ma Y."/>
            <person name="Lai R."/>
        </authorList>
    </citation>
    <scope>NUCLEOTIDE SEQUENCE [MRNA]</scope>
    <scope>FUNCTION</scope>
    <scope>AMIDATION AT LEU-59</scope>
    <scope>SYNTHESIS OF 47-59</scope>
    <source>
        <tissue>Skin</tissue>
    </source>
</reference>
<accession>C5H0E1</accession>
<sequence>MFTLKKSLLLLFFLATINLSFCEQERNAEEERRDEPDERNAEVEKRFFPIVGKLLFGLLGK</sequence>
<keyword id="KW-0027">Amidation</keyword>
<keyword id="KW-0878">Amphibian defense peptide</keyword>
<keyword id="KW-0044">Antibiotic</keyword>
<keyword id="KW-0929">Antimicrobial</keyword>
<keyword id="KW-0165">Cleavage on pair of basic residues</keyword>
<keyword id="KW-0295">Fungicide</keyword>
<keyword id="KW-0391">Immunity</keyword>
<keyword id="KW-0399">Innate immunity</keyword>
<keyword id="KW-0964">Secreted</keyword>
<keyword id="KW-0732">Signal</keyword>
<dbReference type="EMBL" id="EU311554">
    <property type="protein sequence ID" value="ACA09644.1"/>
    <property type="molecule type" value="mRNA"/>
</dbReference>
<dbReference type="GO" id="GO:0005576">
    <property type="term" value="C:extracellular region"/>
    <property type="evidence" value="ECO:0007669"/>
    <property type="project" value="UniProtKB-SubCell"/>
</dbReference>
<dbReference type="GO" id="GO:0042742">
    <property type="term" value="P:defense response to bacterium"/>
    <property type="evidence" value="ECO:0007669"/>
    <property type="project" value="UniProtKB-KW"/>
</dbReference>
<dbReference type="GO" id="GO:0050832">
    <property type="term" value="P:defense response to fungus"/>
    <property type="evidence" value="ECO:0007669"/>
    <property type="project" value="UniProtKB-KW"/>
</dbReference>
<dbReference type="GO" id="GO:0045087">
    <property type="term" value="P:innate immune response"/>
    <property type="evidence" value="ECO:0007669"/>
    <property type="project" value="UniProtKB-KW"/>
</dbReference>
<dbReference type="GO" id="GO:0031640">
    <property type="term" value="P:killing of cells of another organism"/>
    <property type="evidence" value="ECO:0007669"/>
    <property type="project" value="UniProtKB-KW"/>
</dbReference>
<dbReference type="InterPro" id="IPR004275">
    <property type="entry name" value="Frog_antimicrobial_propeptide"/>
</dbReference>
<dbReference type="Pfam" id="PF03032">
    <property type="entry name" value="FSAP_sig_propep"/>
    <property type="match status" value="1"/>
</dbReference>
<comment type="function">
    <text evidence="2">Antimicrobial peptide with activity against Gram-positive and Gram-negative bacteria and against fungi (PubMed:19843479). Has been tested against S.aureus (MIC=7.5 ug/mL), B.pumilus (MIC=15.0 ug/mL), B.cereus (MIC=75.0 ug/mL), E.coli (MIC=15.0 ug/mL), B.dysenteriae (MIC=30.0 ug/mL), A.cacoaceticus (MIC=60.0 ug/mL), P.aeruginosa (MIC=7.5 ug/mL) and C.albicans (MIC=5.0 ug/mL) (PubMed:19843479). Also shows a weak hemolytic activity (PubMed:19843479).</text>
</comment>
<comment type="subcellular location">
    <subcellularLocation>
        <location evidence="5">Secreted</location>
    </subcellularLocation>
</comment>
<comment type="tissue specificity">
    <text evidence="5">Expressed by the skin glands.</text>
</comment>
<comment type="similarity">
    <text evidence="4">Belongs to the frog skin active peptide (FSAP) family. Temporin subfamily.</text>
</comment>
<comment type="online information" name="The antimicrobial peptide database">
    <link uri="https://wangapd3.com/database/query_output.php?ID=01937"/>
</comment>
<evidence type="ECO:0000255" key="1"/>
<evidence type="ECO:0000269" key="2">
    <source>
    </source>
</evidence>
<evidence type="ECO:0000303" key="3">
    <source>
    </source>
</evidence>
<evidence type="ECO:0000305" key="4"/>
<evidence type="ECO:0000305" key="5">
    <source>
    </source>
</evidence>
<evidence type="ECO:0000312" key="6">
    <source>
        <dbReference type="EMBL" id="ACA09644.1"/>
    </source>
</evidence>
<proteinExistence type="evidence at protein level"/>
<name>TPJ_AMOLO</name>